<gene>
    <name type="primary">merR</name>
</gene>
<proteinExistence type="predicted"/>
<organism>
    <name type="scientific">Streptomyces lividans</name>
    <dbReference type="NCBI Taxonomy" id="1916"/>
    <lineage>
        <taxon>Bacteria</taxon>
        <taxon>Bacillati</taxon>
        <taxon>Actinomycetota</taxon>
        <taxon>Actinomycetes</taxon>
        <taxon>Kitasatosporales</taxon>
        <taxon>Streptomycetaceae</taxon>
        <taxon>Streptomyces</taxon>
    </lineage>
</organism>
<name>MERR_STRLI</name>
<feature type="chain" id="PRO_0000160623" description="Probable mercury resistance operon repressor">
    <location>
        <begin position="1"/>
        <end position="125"/>
    </location>
</feature>
<feature type="domain" description="HTH arsR-type" evidence="1">
    <location>
        <begin position="15"/>
        <end position="109"/>
    </location>
</feature>
<feature type="DNA-binding region" description="H-T-H motif" evidence="1">
    <location>
        <begin position="49"/>
        <end position="68"/>
    </location>
</feature>
<feature type="binding site" evidence="1">
    <location>
        <position position="69"/>
    </location>
    <ligand>
        <name>Hg(2+)</name>
        <dbReference type="ChEBI" id="CHEBI:16793"/>
    </ligand>
</feature>
<feature type="binding site" evidence="1">
    <location>
        <position position="73"/>
    </location>
    <ligand>
        <name>Hg(2+)</name>
        <dbReference type="ChEBI" id="CHEBI:16793"/>
    </ligand>
</feature>
<feature type="binding site" evidence="1">
    <location>
        <position position="114"/>
    </location>
    <ligand>
        <name>Hg(2+)</name>
        <dbReference type="ChEBI" id="CHEBI:16793"/>
    </ligand>
</feature>
<reference key="1">
    <citation type="journal article" date="1992" name="Mol. Gen. Genet.">
        <title>Cloning and DNA sequence analysis of the mercury resistance genes of Streptomyces lividans.</title>
        <authorList>
            <person name="Sedlmeier R."/>
            <person name="Altenbuchner J."/>
        </authorList>
    </citation>
    <scope>NUCLEOTIDE SEQUENCE [GENOMIC DNA]</scope>
    <source>
        <strain>66 / 1326</strain>
    </source>
</reference>
<reference key="2">
    <citation type="journal article" date="1996" name="Mol. Gen. Genet.">
        <title>Regulation of the operon responsible for broad-spectrum mercury resistance in Streptomyces lividans 1326.</title>
        <authorList>
            <person name="Brunker P."/>
            <person name="Rother D."/>
            <person name="Sedlmeier R."/>
            <person name="Klein J."/>
            <person name="Mattes R."/>
            <person name="Altenbuchner J."/>
        </authorList>
    </citation>
    <scope>FUNCTION</scope>
    <source>
        <strain>66 / 1326</strain>
    </source>
</reference>
<keyword id="KW-0238">DNA-binding</keyword>
<keyword id="KW-0475">Mercuric resistance</keyword>
<keyword id="KW-0476">Mercury</keyword>
<keyword id="KW-0479">Metal-binding</keyword>
<keyword id="KW-0678">Repressor</keyword>
<keyword id="KW-0804">Transcription</keyword>
<keyword id="KW-0805">Transcription regulation</keyword>
<comment type="function">
    <text evidence="2">Negatively regulates the mercuric reductase merA and the organolyase merB in the absence of mercuric ions.</text>
</comment>
<protein>
    <recommendedName>
        <fullName>Probable mercury resistance operon repressor</fullName>
    </recommendedName>
</protein>
<dbReference type="EMBL" id="X65467">
    <property type="protein sequence ID" value="CAA46462.1"/>
    <property type="molecule type" value="Genomic_DNA"/>
</dbReference>
<dbReference type="PIR" id="S30170">
    <property type="entry name" value="S30170"/>
</dbReference>
<dbReference type="SMR" id="P30346"/>
<dbReference type="GO" id="GO:0003677">
    <property type="term" value="F:DNA binding"/>
    <property type="evidence" value="ECO:0007669"/>
    <property type="project" value="UniProtKB-KW"/>
</dbReference>
<dbReference type="GO" id="GO:0003700">
    <property type="term" value="F:DNA-binding transcription factor activity"/>
    <property type="evidence" value="ECO:0007669"/>
    <property type="project" value="InterPro"/>
</dbReference>
<dbReference type="GO" id="GO:0046872">
    <property type="term" value="F:metal ion binding"/>
    <property type="evidence" value="ECO:0007669"/>
    <property type="project" value="UniProtKB-KW"/>
</dbReference>
<dbReference type="GO" id="GO:0046689">
    <property type="term" value="P:response to mercury ion"/>
    <property type="evidence" value="ECO:0007669"/>
    <property type="project" value="UniProtKB-KW"/>
</dbReference>
<dbReference type="CDD" id="cd00090">
    <property type="entry name" value="HTH_ARSR"/>
    <property type="match status" value="1"/>
</dbReference>
<dbReference type="Gene3D" id="1.10.10.10">
    <property type="entry name" value="Winged helix-like DNA-binding domain superfamily/Winged helix DNA-binding domain"/>
    <property type="match status" value="1"/>
</dbReference>
<dbReference type="InterPro" id="IPR011991">
    <property type="entry name" value="ArsR-like_HTH"/>
</dbReference>
<dbReference type="InterPro" id="IPR001845">
    <property type="entry name" value="HTH_ArsR_DNA-bd_dom"/>
</dbReference>
<dbReference type="InterPro" id="IPR051081">
    <property type="entry name" value="HTH_MetalResp_TranReg"/>
</dbReference>
<dbReference type="InterPro" id="IPR036388">
    <property type="entry name" value="WH-like_DNA-bd_sf"/>
</dbReference>
<dbReference type="InterPro" id="IPR036390">
    <property type="entry name" value="WH_DNA-bd_sf"/>
</dbReference>
<dbReference type="NCBIfam" id="NF033788">
    <property type="entry name" value="HTH_metalloreg"/>
    <property type="match status" value="1"/>
</dbReference>
<dbReference type="PANTHER" id="PTHR33154:SF36">
    <property type="entry name" value="TRANSCRIPTIONAL REGULATOR"/>
    <property type="match status" value="1"/>
</dbReference>
<dbReference type="PANTHER" id="PTHR33154">
    <property type="entry name" value="TRANSCRIPTIONAL REGULATOR, ARSR FAMILY"/>
    <property type="match status" value="1"/>
</dbReference>
<dbReference type="Pfam" id="PF01022">
    <property type="entry name" value="HTH_5"/>
    <property type="match status" value="1"/>
</dbReference>
<dbReference type="PRINTS" id="PR00778">
    <property type="entry name" value="HTHARSR"/>
</dbReference>
<dbReference type="SMART" id="SM00418">
    <property type="entry name" value="HTH_ARSR"/>
    <property type="match status" value="1"/>
</dbReference>
<dbReference type="SUPFAM" id="SSF46785">
    <property type="entry name" value="Winged helix' DNA-binding domain"/>
    <property type="match status" value="1"/>
</dbReference>
<dbReference type="PROSITE" id="PS50987">
    <property type="entry name" value="HTH_ARSR_2"/>
    <property type="match status" value="1"/>
</dbReference>
<sequence>MKSPALAGSLATAEVPCTHPDTTARFFRALADPTRLKLLQFILRGERTSAECVEHAGISQPRVSVHLSCLVDCGYVSARRDGKKLRYSVGDPRVADLVMLARCLAADNAAALDCCTRIPGEGEQR</sequence>
<evidence type="ECO:0000255" key="1">
    <source>
        <dbReference type="PROSITE-ProRule" id="PRU00340"/>
    </source>
</evidence>
<evidence type="ECO:0000269" key="2">
    <source>
    </source>
</evidence>
<accession>P30346</accession>